<gene>
    <name type="primary">hydB</name>
</gene>
<protein>
    <recommendedName>
        <fullName>Periplasmic [NiFe] hydrogenase large subunit</fullName>
        <ecNumber>1.12.2.1</ecNumber>
    </recommendedName>
    <alternativeName>
        <fullName>NiFe hydrogenlyase large chain</fullName>
    </alternativeName>
</protein>
<sequence length="564" mass="61436">MAESKPTPQSTFTGPIVVDPITRIEGHLRIMVEVENGKVKDAWSSSQLFRGLEIILKGRDPRDAQHFTQRACGVCTYVHALASSRCVDDAVKVSIPANARMMRNLVMASQYLHDHLVHFYHLHALDWVDVTAALKADPNKAAKLAASIAPARPGNSAKALKAVQDKLKAFVESGQLGIFTNAYFLGGHKAYYLPPEVDLIATAHYLEALHMQVKAASAMAILGGKNPHTQFTVVGGCSNYQGLTKDPLANYLALSKEVCQFVNECYIPDLLAVAGFYKDWGGIGGTSNYLAFGEFATDDSSPEKHLATSQFPSGVITGRDLGKVDNVDLGAIYEDVKYSWYAPGGDGKHPYDGVTDPKYTKLDDKDHYSWMKAPRYKGKAMEVGPLARTFIAYAKGQPDFKKVVDMVLGKLSVPATALHSTLGRTAARGIETAIVCANMEKWIKEMADSGAKDNTLCAKWEMPEESKGVGLADAPRGALSHWIRIKGKKIDNFQLVVPSTWNLGPRGAQGDKSPVEEALIGTPIADPKRPVEILRTVHAFDPCIACGVHVIEPETNEILKFKVC</sequence>
<reference key="1">
    <citation type="journal article" date="1990" name="Gene">
        <title>Cloning and sequencing of the locus encoding the large and small subunit genes of the periplasmic [NiFe]hydrogenase from Desulfovibrio fructosovorans.</title>
        <authorList>
            <person name="Rousset M."/>
            <person name="Dermoun Z."/>
            <person name="Matchikian C.E."/>
            <person name="Belaich J.-P."/>
        </authorList>
    </citation>
    <scope>NUCLEOTIDE SEQUENCE [GENOMIC DNA]</scope>
    <source>
        <strain>ATCC 49200 / DSM 3604 / VKM B-1801 / JJ</strain>
    </source>
</reference>
<reference key="2">
    <citation type="journal article" date="1990" name="Eur. J. Biochem.">
        <title>Characterization of the nickel-iron periplasmic hydrogenase from Desulfovibrio fructosovorans.</title>
        <authorList>
            <person name="Hatchikian C.E."/>
            <person name="Traore A.S."/>
            <person name="Fernandez V.M."/>
            <person name="Cammack R."/>
        </authorList>
    </citation>
    <scope>PROTEIN SEQUENCE OF 2-20</scope>
</reference>
<name>PHNL_SOLFR</name>
<organism>
    <name type="scientific">Solidesulfovibrio fructosivorans</name>
    <name type="common">Desulfovibrio fructosivorans</name>
    <dbReference type="NCBI Taxonomy" id="878"/>
    <lineage>
        <taxon>Bacteria</taxon>
        <taxon>Pseudomonadati</taxon>
        <taxon>Thermodesulfobacteriota</taxon>
        <taxon>Desulfovibrionia</taxon>
        <taxon>Desulfovibrionales</taxon>
        <taxon>Desulfovibrionaceae</taxon>
        <taxon>Solidesulfovibrio</taxon>
    </lineage>
</organism>
<evidence type="ECO:0000250" key="1"/>
<evidence type="ECO:0000255" key="2"/>
<evidence type="ECO:0000269" key="3">
    <source>
    </source>
</evidence>
<evidence type="ECO:0000305" key="4"/>
<evidence type="ECO:0007829" key="5">
    <source>
        <dbReference type="PDB" id="1FRF"/>
    </source>
</evidence>
<evidence type="ECO:0007829" key="6">
    <source>
        <dbReference type="PDB" id="3CUR"/>
    </source>
</evidence>
<evidence type="ECO:0007829" key="7">
    <source>
        <dbReference type="PDB" id="4UCW"/>
    </source>
</evidence>
<evidence type="ECO:0007829" key="8">
    <source>
        <dbReference type="PDB" id="4UQL"/>
    </source>
</evidence>
<accession>P18188</accession>
<feature type="initiator methionine" description="Removed" evidence="3">
    <location>
        <position position="1"/>
    </location>
</feature>
<feature type="chain" id="PRO_0000013401" description="Periplasmic [NiFe] hydrogenase large subunit">
    <location>
        <begin position="2"/>
        <end position="549"/>
    </location>
</feature>
<feature type="propeptide" id="PRO_0000013402" evidence="1">
    <location>
        <begin position="550"/>
        <end position="564"/>
    </location>
</feature>
<feature type="binding site" evidence="2">
    <location>
        <position position="72"/>
    </location>
    <ligand>
        <name>Ni(2+)</name>
        <dbReference type="ChEBI" id="CHEBI:49786"/>
    </ligand>
</feature>
<feature type="binding site" evidence="2">
    <location>
        <position position="75"/>
    </location>
    <ligand>
        <name>Ni(2+)</name>
        <dbReference type="ChEBI" id="CHEBI:49786"/>
    </ligand>
</feature>
<feature type="binding site" evidence="2">
    <location>
        <position position="543"/>
    </location>
    <ligand>
        <name>Ni(2+)</name>
        <dbReference type="ChEBI" id="CHEBI:49786"/>
    </ligand>
</feature>
<feature type="binding site" evidence="2">
    <location>
        <position position="546"/>
    </location>
    <ligand>
        <name>Ni(2+)</name>
        <dbReference type="ChEBI" id="CHEBI:49786"/>
    </ligand>
</feature>
<feature type="strand" evidence="8">
    <location>
        <begin position="14"/>
        <end position="18"/>
    </location>
</feature>
<feature type="strand" evidence="8">
    <location>
        <begin position="23"/>
        <end position="26"/>
    </location>
</feature>
<feature type="strand" evidence="8">
    <location>
        <begin position="28"/>
        <end position="35"/>
    </location>
</feature>
<feature type="strand" evidence="8">
    <location>
        <begin position="38"/>
        <end position="46"/>
    </location>
</feature>
<feature type="helix" evidence="8">
    <location>
        <begin position="52"/>
        <end position="56"/>
    </location>
</feature>
<feature type="helix" evidence="8">
    <location>
        <begin position="61"/>
        <end position="63"/>
    </location>
</feature>
<feature type="helix" evidence="8">
    <location>
        <begin position="64"/>
        <end position="68"/>
    </location>
</feature>
<feature type="helix" evidence="8">
    <location>
        <begin position="69"/>
        <end position="71"/>
    </location>
</feature>
<feature type="strand" evidence="8">
    <location>
        <begin position="73"/>
        <end position="75"/>
    </location>
</feature>
<feature type="helix" evidence="8">
    <location>
        <begin position="78"/>
        <end position="91"/>
    </location>
</feature>
<feature type="helix" evidence="8">
    <location>
        <begin position="97"/>
        <end position="121"/>
    </location>
</feature>
<feature type="helix" evidence="8">
    <location>
        <begin position="124"/>
        <end position="126"/>
    </location>
</feature>
<feature type="helix" evidence="8">
    <location>
        <begin position="130"/>
        <end position="133"/>
    </location>
</feature>
<feature type="helix" evidence="8">
    <location>
        <begin position="138"/>
        <end position="148"/>
    </location>
</feature>
<feature type="helix" evidence="8">
    <location>
        <begin position="153"/>
        <end position="155"/>
    </location>
</feature>
<feature type="helix" evidence="8">
    <location>
        <begin position="157"/>
        <end position="172"/>
    </location>
</feature>
<feature type="helix" evidence="8">
    <location>
        <begin position="177"/>
        <end position="179"/>
    </location>
</feature>
<feature type="turn" evidence="8">
    <location>
        <begin position="183"/>
        <end position="186"/>
    </location>
</feature>
<feature type="helix" evidence="8">
    <location>
        <begin position="195"/>
        <end position="223"/>
    </location>
</feature>
<feature type="strand" evidence="8">
    <location>
        <begin position="224"/>
        <end position="228"/>
    </location>
</feature>
<feature type="strand" evidence="6">
    <location>
        <begin position="236"/>
        <end position="238"/>
    </location>
</feature>
<feature type="helix" evidence="8">
    <location>
        <begin position="240"/>
        <end position="243"/>
    </location>
</feature>
<feature type="helix" evidence="8">
    <location>
        <begin position="245"/>
        <end position="264"/>
    </location>
</feature>
<feature type="helix" evidence="8">
    <location>
        <begin position="266"/>
        <end position="276"/>
    </location>
</feature>
<feature type="helix" evidence="8">
    <location>
        <begin position="278"/>
        <end position="282"/>
    </location>
</feature>
<feature type="strand" evidence="8">
    <location>
        <begin position="289"/>
        <end position="291"/>
    </location>
</feature>
<feature type="strand" evidence="8">
    <location>
        <begin position="294"/>
        <end position="297"/>
    </location>
</feature>
<feature type="helix" evidence="8">
    <location>
        <begin position="302"/>
        <end position="308"/>
    </location>
</feature>
<feature type="strand" evidence="8">
    <location>
        <begin position="309"/>
        <end position="311"/>
    </location>
</feature>
<feature type="strand" evidence="8">
    <location>
        <begin position="314"/>
        <end position="316"/>
    </location>
</feature>
<feature type="helix" evidence="8">
    <location>
        <begin position="329"/>
        <end position="331"/>
    </location>
</feature>
<feature type="strand" evidence="8">
    <location>
        <begin position="332"/>
        <end position="335"/>
    </location>
</feature>
<feature type="strand" evidence="8">
    <location>
        <begin position="339"/>
        <end position="341"/>
    </location>
</feature>
<feature type="helix" evidence="8">
    <location>
        <begin position="350"/>
        <end position="352"/>
    </location>
</feature>
<feature type="strand" evidence="5">
    <location>
        <begin position="365"/>
        <end position="367"/>
    </location>
</feature>
<feature type="strand" evidence="8">
    <location>
        <begin position="369"/>
        <end position="371"/>
    </location>
</feature>
<feature type="strand" evidence="8">
    <location>
        <begin position="373"/>
        <end position="376"/>
    </location>
</feature>
<feature type="strand" evidence="7">
    <location>
        <begin position="382"/>
        <end position="384"/>
    </location>
</feature>
<feature type="helix" evidence="8">
    <location>
        <begin position="385"/>
        <end position="394"/>
    </location>
</feature>
<feature type="helix" evidence="8">
    <location>
        <begin position="398"/>
        <end position="411"/>
    </location>
</feature>
<feature type="helix" evidence="8">
    <location>
        <begin position="415"/>
        <end position="418"/>
    </location>
</feature>
<feature type="helix" evidence="8">
    <location>
        <begin position="421"/>
        <end position="452"/>
    </location>
</feature>
<feature type="strand" evidence="8">
    <location>
        <begin position="464"/>
        <end position="474"/>
    </location>
</feature>
<feature type="strand" evidence="8">
    <location>
        <begin position="477"/>
        <end position="486"/>
    </location>
</feature>
<feature type="strand" evidence="8">
    <location>
        <begin position="489"/>
        <end position="496"/>
    </location>
</feature>
<feature type="helix" evidence="8">
    <location>
        <begin position="498"/>
        <end position="503"/>
    </location>
</feature>
<feature type="helix" evidence="8">
    <location>
        <begin position="514"/>
        <end position="519"/>
    </location>
</feature>
<feature type="helix" evidence="8">
    <location>
        <begin position="531"/>
        <end position="539"/>
    </location>
</feature>
<feature type="helix" evidence="8">
    <location>
        <begin position="544"/>
        <end position="548"/>
    </location>
</feature>
<comment type="catalytic activity">
    <reaction>
        <text>2 Fe(III)-[cytochrome c3] + H2 = 2 Fe(II)-[cytochrome c3] + 2 H(+)</text>
        <dbReference type="Rhea" id="RHEA:20625"/>
        <dbReference type="Rhea" id="RHEA-COMP:11576"/>
        <dbReference type="Rhea" id="RHEA-COMP:11577"/>
        <dbReference type="ChEBI" id="CHEBI:15378"/>
        <dbReference type="ChEBI" id="CHEBI:18276"/>
        <dbReference type="ChEBI" id="CHEBI:29033"/>
        <dbReference type="ChEBI" id="CHEBI:29034"/>
        <dbReference type="EC" id="1.12.2.1"/>
    </reaction>
</comment>
<comment type="cofactor">
    <cofactor>
        <name>Ni(2+)</name>
        <dbReference type="ChEBI" id="CHEBI:49786"/>
    </cofactor>
    <text>Binds 1 nickel ion per subunit.</text>
</comment>
<comment type="subunit">
    <text>Heterodimer of a large and a small subunit.</text>
</comment>
<comment type="subcellular location">
    <subcellularLocation>
        <location>Periplasm</location>
    </subcellularLocation>
</comment>
<comment type="miscellaneous">
    <text>Perhaps the leader of the small subunit serves as a transport vehicle for both subunits.</text>
</comment>
<comment type="similarity">
    <text evidence="4">Belongs to the [NiFe]/[NiFeSe] hydrogenase large subunit family.</text>
</comment>
<keyword id="KW-0002">3D-structure</keyword>
<keyword id="KW-0903">Direct protein sequencing</keyword>
<keyword id="KW-0479">Metal-binding</keyword>
<keyword id="KW-0533">Nickel</keyword>
<keyword id="KW-0560">Oxidoreductase</keyword>
<keyword id="KW-0574">Periplasm</keyword>
<dbReference type="EC" id="1.12.2.1"/>
<dbReference type="EMBL" id="M35333">
    <property type="protein sequence ID" value="AAA23372.2"/>
    <property type="molecule type" value="Genomic_DNA"/>
</dbReference>
<dbReference type="PIR" id="JQ0762">
    <property type="entry name" value="S08199"/>
</dbReference>
<dbReference type="PDB" id="1FRF">
    <property type="method" value="X-ray"/>
    <property type="resolution" value="2.70 A"/>
    <property type="chains" value="L=1-564"/>
</dbReference>
<dbReference type="PDB" id="1YQW">
    <property type="method" value="X-ray"/>
    <property type="resolution" value="1.83 A"/>
    <property type="chains" value="Q/R/S=1-549"/>
</dbReference>
<dbReference type="PDB" id="1YRQ">
    <property type="method" value="X-ray"/>
    <property type="resolution" value="2.10 A"/>
    <property type="chains" value="H/I/J/K/M/N=1-549"/>
</dbReference>
<dbReference type="PDB" id="3CUR">
    <property type="method" value="X-ray"/>
    <property type="resolution" value="2.40 A"/>
    <property type="chains" value="H/I/J=1-549"/>
</dbReference>
<dbReference type="PDB" id="3CUS">
    <property type="method" value="X-ray"/>
    <property type="resolution" value="2.20 A"/>
    <property type="chains" value="Q/R/S=1-549"/>
</dbReference>
<dbReference type="PDB" id="3H3X">
    <property type="method" value="X-ray"/>
    <property type="resolution" value="2.70 A"/>
    <property type="chains" value="Q/R/S=1-549"/>
</dbReference>
<dbReference type="PDB" id="4UCQ">
    <property type="method" value="X-ray"/>
    <property type="resolution" value="2.60 A"/>
    <property type="chains" value="Q/R/S=2-549"/>
</dbReference>
<dbReference type="PDB" id="4UCW">
    <property type="method" value="X-ray"/>
    <property type="resolution" value="2.30 A"/>
    <property type="chains" value="Q/R/S=2-549"/>
</dbReference>
<dbReference type="PDB" id="4UCX">
    <property type="method" value="X-ray"/>
    <property type="resolution" value="1.95 A"/>
    <property type="chains" value="Q/R/S=2-549"/>
</dbReference>
<dbReference type="PDB" id="4UE2">
    <property type="method" value="X-ray"/>
    <property type="resolution" value="2.02 A"/>
    <property type="chains" value="Q/R/S=1-549"/>
</dbReference>
<dbReference type="PDB" id="4UE6">
    <property type="method" value="X-ray"/>
    <property type="resolution" value="2.30 A"/>
    <property type="chains" value="Q/R/S=1-549"/>
</dbReference>
<dbReference type="PDB" id="4UEW">
    <property type="method" value="X-ray"/>
    <property type="resolution" value="2.08 A"/>
    <property type="chains" value="Q/R/S=1-549"/>
</dbReference>
<dbReference type="PDB" id="4UPE">
    <property type="method" value="X-ray"/>
    <property type="resolution" value="1.80 A"/>
    <property type="chains" value="Q/R/S=2-549"/>
</dbReference>
<dbReference type="PDB" id="4UPV">
    <property type="method" value="X-ray"/>
    <property type="resolution" value="1.52 A"/>
    <property type="chains" value="Q/R=2-549"/>
</dbReference>
<dbReference type="PDB" id="4UQL">
    <property type="method" value="X-ray"/>
    <property type="resolution" value="1.22 A"/>
    <property type="chains" value="Q/R=2-549"/>
</dbReference>
<dbReference type="PDB" id="4UQP">
    <property type="method" value="X-ray"/>
    <property type="resolution" value="1.42 A"/>
    <property type="chains" value="Q/R=2-549"/>
</dbReference>
<dbReference type="PDB" id="4URH">
    <property type="method" value="X-ray"/>
    <property type="resolution" value="1.44 A"/>
    <property type="chains" value="Q/R/S=2-549"/>
</dbReference>
<dbReference type="PDBsum" id="1FRF"/>
<dbReference type="PDBsum" id="1YQW"/>
<dbReference type="PDBsum" id="1YRQ"/>
<dbReference type="PDBsum" id="3CUR"/>
<dbReference type="PDBsum" id="3CUS"/>
<dbReference type="PDBsum" id="3H3X"/>
<dbReference type="PDBsum" id="4UCQ"/>
<dbReference type="PDBsum" id="4UCW"/>
<dbReference type="PDBsum" id="4UCX"/>
<dbReference type="PDBsum" id="4UE2"/>
<dbReference type="PDBsum" id="4UE6"/>
<dbReference type="PDBsum" id="4UEW"/>
<dbReference type="PDBsum" id="4UPE"/>
<dbReference type="PDBsum" id="4UPV"/>
<dbReference type="PDBsum" id="4UQL"/>
<dbReference type="PDBsum" id="4UQP"/>
<dbReference type="PDBsum" id="4URH"/>
<dbReference type="SMR" id="P18188"/>
<dbReference type="DIP" id="DIP-6171N"/>
<dbReference type="MINT" id="P18188"/>
<dbReference type="EvolutionaryTrace" id="P18188"/>
<dbReference type="GO" id="GO:0042597">
    <property type="term" value="C:periplasmic space"/>
    <property type="evidence" value="ECO:0007669"/>
    <property type="project" value="UniProtKB-SubCell"/>
</dbReference>
<dbReference type="GO" id="GO:0047806">
    <property type="term" value="F:cytochrome-c3 hydrogenase activity"/>
    <property type="evidence" value="ECO:0007669"/>
    <property type="project" value="UniProtKB-EC"/>
</dbReference>
<dbReference type="GO" id="GO:0008901">
    <property type="term" value="F:ferredoxin hydrogenase activity"/>
    <property type="evidence" value="ECO:0007669"/>
    <property type="project" value="InterPro"/>
</dbReference>
<dbReference type="GO" id="GO:0016151">
    <property type="term" value="F:nickel cation binding"/>
    <property type="evidence" value="ECO:0007669"/>
    <property type="project" value="InterPro"/>
</dbReference>
<dbReference type="FunFam" id="1.10.645.10:FF:000002">
    <property type="entry name" value="Hydrogenase 2 large subunit"/>
    <property type="match status" value="1"/>
</dbReference>
<dbReference type="Gene3D" id="1.10.645.10">
    <property type="entry name" value="Cytochrome-c3 Hydrogenase, chain B"/>
    <property type="match status" value="1"/>
</dbReference>
<dbReference type="InterPro" id="IPR001501">
    <property type="entry name" value="Ni-dep_hyd_lsu"/>
</dbReference>
<dbReference type="InterPro" id="IPR018194">
    <property type="entry name" value="Ni-dep_hyd_lsu_Ni_BS"/>
</dbReference>
<dbReference type="InterPro" id="IPR029014">
    <property type="entry name" value="NiFe-Hase_large"/>
</dbReference>
<dbReference type="InterPro" id="IPR050867">
    <property type="entry name" value="NiFe/NiFeSe_hydrgnase_LSU"/>
</dbReference>
<dbReference type="PANTHER" id="PTHR42958">
    <property type="entry name" value="HYDROGENASE-2 LARGE CHAIN"/>
    <property type="match status" value="1"/>
</dbReference>
<dbReference type="PANTHER" id="PTHR42958:SF2">
    <property type="entry name" value="UPTAKE HYDROGENASE LARGE SUBUNIT"/>
    <property type="match status" value="1"/>
</dbReference>
<dbReference type="Pfam" id="PF00374">
    <property type="entry name" value="NiFeSe_Hases"/>
    <property type="match status" value="1"/>
</dbReference>
<dbReference type="SUPFAM" id="SSF56762">
    <property type="entry name" value="HydB/Nqo4-like"/>
    <property type="match status" value="1"/>
</dbReference>
<dbReference type="PROSITE" id="PS00507">
    <property type="entry name" value="NI_HGENASE_L_1"/>
    <property type="match status" value="1"/>
</dbReference>
<dbReference type="PROSITE" id="PS00508">
    <property type="entry name" value="NI_HGENASE_L_2"/>
    <property type="match status" value="1"/>
</dbReference>
<proteinExistence type="evidence at protein level"/>